<gene>
    <name type="primary">csp</name>
    <name type="synonym">cspP</name>
    <name type="ordered locus">lp_1160</name>
</gene>
<comment type="subcellular location">
    <subcellularLocation>
        <location evidence="1">Cytoplasm</location>
    </subcellularLocation>
</comment>
<comment type="induction">
    <text>In response to low temperature.</text>
</comment>
<feature type="chain" id="PRO_0000100305" description="Cold shock protein 1">
    <location>
        <begin position="1"/>
        <end position="66"/>
    </location>
</feature>
<feature type="domain" description="CSD">
    <location>
        <begin position="4"/>
        <end position="63"/>
    </location>
</feature>
<feature type="region of interest" description="Disordered" evidence="2">
    <location>
        <begin position="47"/>
        <end position="66"/>
    </location>
</feature>
<accession>P71478</accession>
<accession>F9UMW0</accession>
<evidence type="ECO:0000250" key="1"/>
<evidence type="ECO:0000256" key="2">
    <source>
        <dbReference type="SAM" id="MobiDB-lite"/>
    </source>
</evidence>
<keyword id="KW-0010">Activator</keyword>
<keyword id="KW-0963">Cytoplasm</keyword>
<keyword id="KW-0238">DNA-binding</keyword>
<keyword id="KW-1185">Reference proteome</keyword>
<keyword id="KW-0346">Stress response</keyword>
<keyword id="KW-0804">Transcription</keyword>
<keyword id="KW-0805">Transcription regulation</keyword>
<name>CSP1_LACPL</name>
<sequence length="66" mass="7257">MKNGTVKWFNADKGYGFITGEDGNDVFVHFSAIQTDGFKTLEEGQKVTFDEESSDRGPQAANVVPQ</sequence>
<organism>
    <name type="scientific">Lactiplantibacillus plantarum (strain ATCC BAA-793 / NCIMB 8826 / WCFS1)</name>
    <name type="common">Lactobacillus plantarum</name>
    <dbReference type="NCBI Taxonomy" id="220668"/>
    <lineage>
        <taxon>Bacteria</taxon>
        <taxon>Bacillati</taxon>
        <taxon>Bacillota</taxon>
        <taxon>Bacilli</taxon>
        <taxon>Lactobacillales</taxon>
        <taxon>Lactobacillaceae</taxon>
        <taxon>Lactiplantibacillus</taxon>
    </lineage>
</organism>
<dbReference type="EMBL" id="Y08760">
    <property type="protein sequence ID" value="CAA70005.1"/>
    <property type="molecule type" value="Genomic_DNA"/>
</dbReference>
<dbReference type="EMBL" id="AL935263">
    <property type="protein sequence ID" value="CCC78549.1"/>
    <property type="molecule type" value="Genomic_DNA"/>
</dbReference>
<dbReference type="RefSeq" id="WP_003638174.1">
    <property type="nucleotide sequence ID" value="NC_004567.2"/>
</dbReference>
<dbReference type="RefSeq" id="YP_004889063.1">
    <property type="nucleotide sequence ID" value="NC_004567.2"/>
</dbReference>
<dbReference type="SMR" id="P71478"/>
<dbReference type="STRING" id="220668.lp_1160"/>
<dbReference type="EnsemblBacteria" id="CCC78549">
    <property type="protein sequence ID" value="CCC78549"/>
    <property type="gene ID" value="lp_1160"/>
</dbReference>
<dbReference type="KEGG" id="lpl:lp_1160"/>
<dbReference type="PATRIC" id="fig|220668.9.peg.980"/>
<dbReference type="eggNOG" id="COG1278">
    <property type="taxonomic scope" value="Bacteria"/>
</dbReference>
<dbReference type="HOGENOM" id="CLU_117621_6_3_9"/>
<dbReference type="OrthoDB" id="9805039at2"/>
<dbReference type="PhylomeDB" id="P71478"/>
<dbReference type="Proteomes" id="UP000000432">
    <property type="component" value="Chromosome"/>
</dbReference>
<dbReference type="GO" id="GO:0005737">
    <property type="term" value="C:cytoplasm"/>
    <property type="evidence" value="ECO:0007669"/>
    <property type="project" value="UniProtKB-SubCell"/>
</dbReference>
<dbReference type="GO" id="GO:0003677">
    <property type="term" value="F:DNA binding"/>
    <property type="evidence" value="ECO:0007669"/>
    <property type="project" value="UniProtKB-KW"/>
</dbReference>
<dbReference type="CDD" id="cd04458">
    <property type="entry name" value="CSP_CDS"/>
    <property type="match status" value="1"/>
</dbReference>
<dbReference type="FunFam" id="2.40.50.140:FF:000006">
    <property type="entry name" value="Cold shock protein CspC"/>
    <property type="match status" value="1"/>
</dbReference>
<dbReference type="Gene3D" id="6.20.370.130">
    <property type="match status" value="1"/>
</dbReference>
<dbReference type="Gene3D" id="2.40.50.140">
    <property type="entry name" value="Nucleic acid-binding proteins"/>
    <property type="match status" value="1"/>
</dbReference>
<dbReference type="InterPro" id="IPR012156">
    <property type="entry name" value="Cold_shock_CspA"/>
</dbReference>
<dbReference type="InterPro" id="IPR050181">
    <property type="entry name" value="Cold_shock_domain"/>
</dbReference>
<dbReference type="InterPro" id="IPR011129">
    <property type="entry name" value="CSD"/>
</dbReference>
<dbReference type="InterPro" id="IPR019844">
    <property type="entry name" value="CSD_CS"/>
</dbReference>
<dbReference type="InterPro" id="IPR002059">
    <property type="entry name" value="CSP_DNA-bd"/>
</dbReference>
<dbReference type="InterPro" id="IPR012340">
    <property type="entry name" value="NA-bd_OB-fold"/>
</dbReference>
<dbReference type="PANTHER" id="PTHR11544">
    <property type="entry name" value="COLD SHOCK DOMAIN CONTAINING PROTEINS"/>
    <property type="match status" value="1"/>
</dbReference>
<dbReference type="Pfam" id="PF00313">
    <property type="entry name" value="CSD"/>
    <property type="match status" value="1"/>
</dbReference>
<dbReference type="PIRSF" id="PIRSF002599">
    <property type="entry name" value="Cold_shock_A"/>
    <property type="match status" value="1"/>
</dbReference>
<dbReference type="PRINTS" id="PR00050">
    <property type="entry name" value="COLDSHOCK"/>
</dbReference>
<dbReference type="SMART" id="SM00357">
    <property type="entry name" value="CSP"/>
    <property type="match status" value="1"/>
</dbReference>
<dbReference type="SUPFAM" id="SSF50249">
    <property type="entry name" value="Nucleic acid-binding proteins"/>
    <property type="match status" value="1"/>
</dbReference>
<dbReference type="PROSITE" id="PS00352">
    <property type="entry name" value="CSD_1"/>
    <property type="match status" value="1"/>
</dbReference>
<dbReference type="PROSITE" id="PS51857">
    <property type="entry name" value="CSD_2"/>
    <property type="match status" value="1"/>
</dbReference>
<protein>
    <recommendedName>
        <fullName>Cold shock protein 1</fullName>
    </recommendedName>
</protein>
<reference key="1">
    <citation type="journal article" date="1997" name="J. Bacteriol.">
        <title>Cloning and characterization of cspL and cspP, two cold-inducible genes from Lactobacillus plantarum.</title>
        <authorList>
            <person name="Mayo B."/>
            <person name="Derzelle S."/>
            <person name="Fernandez M."/>
            <person name="Leonard C."/>
            <person name="Ferain T."/>
            <person name="Hols P."/>
            <person name="Suarez J.E."/>
            <person name="Delcour J."/>
        </authorList>
    </citation>
    <scope>NUCLEOTIDE SEQUENCE [GENOMIC DNA]</scope>
    <source>
        <strain>C38</strain>
    </source>
</reference>
<reference key="2">
    <citation type="journal article" date="2003" name="Proc. Natl. Acad. Sci. U.S.A.">
        <title>Complete genome sequence of Lactobacillus plantarum WCFS1.</title>
        <authorList>
            <person name="Kleerebezem M."/>
            <person name="Boekhorst J."/>
            <person name="van Kranenburg R."/>
            <person name="Molenaar D."/>
            <person name="Kuipers O.P."/>
            <person name="Leer R."/>
            <person name="Tarchini R."/>
            <person name="Peters S.A."/>
            <person name="Sandbrink H.M."/>
            <person name="Fiers M.W.E.J."/>
            <person name="Stiekema W."/>
            <person name="Klein Lankhorst R.M."/>
            <person name="Bron P.A."/>
            <person name="Hoffer S.M."/>
            <person name="Nierop Groot M.N."/>
            <person name="Kerkhoven R."/>
            <person name="De Vries M."/>
            <person name="Ursing B."/>
            <person name="De Vos W.M."/>
            <person name="Siezen R.J."/>
        </authorList>
    </citation>
    <scope>NUCLEOTIDE SEQUENCE [LARGE SCALE GENOMIC DNA]</scope>
    <source>
        <strain>ATCC BAA-793 / NCIMB 8826 / WCFS1</strain>
    </source>
</reference>
<reference key="3">
    <citation type="journal article" date="2012" name="J. Bacteriol.">
        <title>Complete resequencing and reannotation of the Lactobacillus plantarum WCFS1 genome.</title>
        <authorList>
            <person name="Siezen R.J."/>
            <person name="Francke C."/>
            <person name="Renckens B."/>
            <person name="Boekhorst J."/>
            <person name="Wels M."/>
            <person name="Kleerebezem M."/>
            <person name="van Hijum S.A."/>
        </authorList>
    </citation>
    <scope>NUCLEOTIDE SEQUENCE [LARGE SCALE GENOMIC DNA]</scope>
    <scope>GENOME REANNOTATION</scope>
    <source>
        <strain>ATCC BAA-793 / NCIMB 8826 / WCFS1</strain>
    </source>
</reference>
<proteinExistence type="evidence at transcript level"/>